<sequence>SSVNARPCSSPLVCPAKGEKFFGVGSASRIRQLPPRLAWCSIDWDQLCLLHLLGSGGFGSVYKATYHGATVAVKQVKKCSKNHLASRQSFWAELNVACLDHNNVVHIVAASTCTPTSQDSLGTIIMEYAGNCTLHHVIYGIGYLTGNNDGLKRDHEFLSTAQAVVYSCDIVAGLMFLHSQLIVHLDLKPANIF</sequence>
<keyword id="KW-0067">ATP-binding</keyword>
<keyword id="KW-0418">Kinase</keyword>
<keyword id="KW-0547">Nucleotide-binding</keyword>
<keyword id="KW-0723">Serine/threonine-protein kinase</keyword>
<keyword id="KW-0808">Transferase</keyword>
<protein>
    <recommendedName>
        <fullName>Serine/threonine-protein kinase mos</fullName>
        <ecNumber>2.7.11.1</ecNumber>
    </recommendedName>
    <alternativeName>
        <fullName>Oocyte maturation factor mos</fullName>
    </alternativeName>
</protein>
<gene>
    <name type="primary">MOS</name>
</gene>
<proteinExistence type="inferred from homology"/>
<accession>Q8AX00</accession>
<reference key="1">
    <citation type="journal article" date="2002" name="C. R. Biol.">
        <title>Higher-level relationships of snakes inferred from four nuclear and mitochondrial genes.</title>
        <authorList>
            <person name="Vidal N."/>
            <person name="Hedges S.B."/>
        </authorList>
    </citation>
    <scope>NUCLEOTIDE SEQUENCE [GENOMIC DNA]</scope>
</reference>
<name>MOS_SIBNE</name>
<organism>
    <name type="scientific">Sibon nebulatus</name>
    <name type="common">Cloudy snail-eating snake</name>
    <name type="synonym">Coluber sibon</name>
    <dbReference type="NCBI Taxonomy" id="211651"/>
    <lineage>
        <taxon>Eukaryota</taxon>
        <taxon>Metazoa</taxon>
        <taxon>Chordata</taxon>
        <taxon>Craniata</taxon>
        <taxon>Vertebrata</taxon>
        <taxon>Euteleostomi</taxon>
        <taxon>Lepidosauria</taxon>
        <taxon>Squamata</taxon>
        <taxon>Bifurcata</taxon>
        <taxon>Unidentata</taxon>
        <taxon>Episquamata</taxon>
        <taxon>Toxicofera</taxon>
        <taxon>Serpentes</taxon>
        <taxon>Colubroidea</taxon>
        <taxon>Dipsadidae</taxon>
        <taxon>Sibon</taxon>
    </lineage>
</organism>
<dbReference type="EC" id="2.7.11.1"/>
<dbReference type="EMBL" id="AF544736">
    <property type="protein sequence ID" value="AAO13459.1"/>
    <property type="molecule type" value="Genomic_DNA"/>
</dbReference>
<dbReference type="SMR" id="Q8AX00"/>
<dbReference type="GO" id="GO:0005524">
    <property type="term" value="F:ATP binding"/>
    <property type="evidence" value="ECO:0007669"/>
    <property type="project" value="UniProtKB-KW"/>
</dbReference>
<dbReference type="GO" id="GO:0106310">
    <property type="term" value="F:protein serine kinase activity"/>
    <property type="evidence" value="ECO:0007669"/>
    <property type="project" value="RHEA"/>
</dbReference>
<dbReference type="GO" id="GO:0004674">
    <property type="term" value="F:protein serine/threonine kinase activity"/>
    <property type="evidence" value="ECO:0007669"/>
    <property type="project" value="UniProtKB-KW"/>
</dbReference>
<dbReference type="FunFam" id="3.30.200.20:FF:000316">
    <property type="entry name" value="Proto-oncogene serine/threonine-protein kinase mos"/>
    <property type="match status" value="1"/>
</dbReference>
<dbReference type="Gene3D" id="3.30.200.20">
    <property type="entry name" value="Phosphorylase Kinase, domain 1"/>
    <property type="match status" value="1"/>
</dbReference>
<dbReference type="Gene3D" id="1.10.510.10">
    <property type="entry name" value="Transferase(Phosphotransferase) domain 1"/>
    <property type="match status" value="1"/>
</dbReference>
<dbReference type="InterPro" id="IPR011009">
    <property type="entry name" value="Kinase-like_dom_sf"/>
</dbReference>
<dbReference type="InterPro" id="IPR000719">
    <property type="entry name" value="Prot_kinase_dom"/>
</dbReference>
<dbReference type="InterPro" id="IPR017441">
    <property type="entry name" value="Protein_kinase_ATP_BS"/>
</dbReference>
<dbReference type="InterPro" id="IPR051681">
    <property type="entry name" value="Ser/Thr_Kinases-Pseudokinases"/>
</dbReference>
<dbReference type="PANTHER" id="PTHR44329">
    <property type="entry name" value="SERINE/THREONINE-PROTEIN KINASE TNNI3K-RELATED"/>
    <property type="match status" value="1"/>
</dbReference>
<dbReference type="PANTHER" id="PTHR44329:SF285">
    <property type="entry name" value="V-MOS MOLONEY MURINE SARCOMA VIRAL ONCO HOMOLOG"/>
    <property type="match status" value="1"/>
</dbReference>
<dbReference type="Pfam" id="PF00069">
    <property type="entry name" value="Pkinase"/>
    <property type="match status" value="1"/>
</dbReference>
<dbReference type="SMART" id="SM00220">
    <property type="entry name" value="S_TKc"/>
    <property type="match status" value="1"/>
</dbReference>
<dbReference type="SUPFAM" id="SSF56112">
    <property type="entry name" value="Protein kinase-like (PK-like)"/>
    <property type="match status" value="1"/>
</dbReference>
<dbReference type="PROSITE" id="PS00107">
    <property type="entry name" value="PROTEIN_KINASE_ATP"/>
    <property type="match status" value="1"/>
</dbReference>
<dbReference type="PROSITE" id="PS50011">
    <property type="entry name" value="PROTEIN_KINASE_DOM"/>
    <property type="match status" value="1"/>
</dbReference>
<comment type="catalytic activity">
    <reaction>
        <text>L-seryl-[protein] + ATP = O-phospho-L-seryl-[protein] + ADP + H(+)</text>
        <dbReference type="Rhea" id="RHEA:17989"/>
        <dbReference type="Rhea" id="RHEA-COMP:9863"/>
        <dbReference type="Rhea" id="RHEA-COMP:11604"/>
        <dbReference type="ChEBI" id="CHEBI:15378"/>
        <dbReference type="ChEBI" id="CHEBI:29999"/>
        <dbReference type="ChEBI" id="CHEBI:30616"/>
        <dbReference type="ChEBI" id="CHEBI:83421"/>
        <dbReference type="ChEBI" id="CHEBI:456216"/>
        <dbReference type="EC" id="2.7.11.1"/>
    </reaction>
</comment>
<comment type="catalytic activity">
    <reaction>
        <text>L-threonyl-[protein] + ATP = O-phospho-L-threonyl-[protein] + ADP + H(+)</text>
        <dbReference type="Rhea" id="RHEA:46608"/>
        <dbReference type="Rhea" id="RHEA-COMP:11060"/>
        <dbReference type="Rhea" id="RHEA-COMP:11605"/>
        <dbReference type="ChEBI" id="CHEBI:15378"/>
        <dbReference type="ChEBI" id="CHEBI:30013"/>
        <dbReference type="ChEBI" id="CHEBI:30616"/>
        <dbReference type="ChEBI" id="CHEBI:61977"/>
        <dbReference type="ChEBI" id="CHEBI:456216"/>
        <dbReference type="EC" id="2.7.11.1"/>
    </reaction>
</comment>
<comment type="similarity">
    <text evidence="1">Belongs to the protein kinase superfamily. Ser/Thr protein kinase family.</text>
</comment>
<evidence type="ECO:0000255" key="1">
    <source>
        <dbReference type="PROSITE-ProRule" id="PRU00159"/>
    </source>
</evidence>
<evidence type="ECO:0000255" key="2">
    <source>
        <dbReference type="PROSITE-ProRule" id="PRU10027"/>
    </source>
</evidence>
<feature type="chain" id="PRO_0000086356" description="Serine/threonine-protein kinase mos">
    <location>
        <begin position="1" status="less than"/>
        <end position="193" status="greater than"/>
    </location>
</feature>
<feature type="domain" description="Protein kinase" evidence="1">
    <location>
        <begin position="47"/>
        <end position="193" status="greater than"/>
    </location>
</feature>
<feature type="active site" description="Proton acceptor" evidence="1 2">
    <location>
        <position position="186"/>
    </location>
</feature>
<feature type="binding site" evidence="1">
    <location>
        <begin position="53"/>
        <end position="61"/>
    </location>
    <ligand>
        <name>ATP</name>
        <dbReference type="ChEBI" id="CHEBI:30616"/>
    </ligand>
</feature>
<feature type="binding site" evidence="1">
    <location>
        <position position="74"/>
    </location>
    <ligand>
        <name>ATP</name>
        <dbReference type="ChEBI" id="CHEBI:30616"/>
    </ligand>
</feature>
<feature type="non-terminal residue">
    <location>
        <position position="1"/>
    </location>
</feature>
<feature type="non-terminal residue">
    <location>
        <position position="193"/>
    </location>
</feature>